<reference key="1">
    <citation type="journal article" date="2002" name="Mol. Cell. Biol.">
        <title>Identification and characterization of a tissue-specific coactivator, GT198, that interacts with the DNA-binding domains of nuclear receptors.</title>
        <authorList>
            <person name="Ko L."/>
            <person name="Cardona G.R."/>
            <person name="Henrion-Caude A."/>
            <person name="Chin W.W."/>
        </authorList>
    </citation>
    <scope>NUCLEOTIDE SEQUENCE [MRNA]</scope>
    <scope>INTERACTION WITH NR3C1; ESR2; THRB AND RXRA</scope>
    <scope>REGION</scope>
    <scope>PHOSPHORYLATION</scope>
    <scope>FUNCTION</scope>
    <source>
        <tissue>Pituitary</tissue>
    </source>
</reference>
<organism>
    <name type="scientific">Rattus norvegicus</name>
    <name type="common">Rat</name>
    <dbReference type="NCBI Taxonomy" id="10116"/>
    <lineage>
        <taxon>Eukaryota</taxon>
        <taxon>Metazoa</taxon>
        <taxon>Chordata</taxon>
        <taxon>Craniata</taxon>
        <taxon>Vertebrata</taxon>
        <taxon>Euteleostomi</taxon>
        <taxon>Mammalia</taxon>
        <taxon>Eutheria</taxon>
        <taxon>Euarchontoglires</taxon>
        <taxon>Glires</taxon>
        <taxon>Rodentia</taxon>
        <taxon>Myomorpha</taxon>
        <taxon>Muroidea</taxon>
        <taxon>Muridae</taxon>
        <taxon>Murinae</taxon>
        <taxon>Rattus</taxon>
    </lineage>
</organism>
<keyword id="KW-0175">Coiled coil</keyword>
<keyword id="KW-0233">DNA recombination</keyword>
<keyword id="KW-0238">DNA-binding</keyword>
<keyword id="KW-0469">Meiosis</keyword>
<keyword id="KW-0539">Nucleus</keyword>
<keyword id="KW-1185">Reference proteome</keyword>
<proteinExistence type="evidence at protein level"/>
<accession>Q91ZY6</accession>
<sequence>MSKSRAEAAAGAPGIVLRYLQEQNRPYSAQDVFGNLQKEHGLGKAAVVKALDQLAQQGKIKEKTYGKQKIYFADQDQFDTVSDADLHSLDASIMALTAKVQGLQQSCRHMEAELKELTSALTTPEMQTEIQELKKECARYTERLKNIKAATNHVTPEEKEKVYRERQKYCKEWRKRKRMTTELCDAILEGYPKSKKQFFEEVGIETDEDHNVTLPNP</sequence>
<evidence type="ECO:0000250" key="1"/>
<evidence type="ECO:0000255" key="2"/>
<evidence type="ECO:0000269" key="3">
    <source>
    </source>
</evidence>
<evidence type="ECO:0000305" key="4"/>
<gene>
    <name type="primary">Psmc3ip</name>
</gene>
<feature type="chain" id="PRO_0000314137" description="Homologous-pairing protein 2 homolog">
    <location>
        <begin position="1"/>
        <end position="217"/>
    </location>
</feature>
<feature type="region of interest" description="Interaction with NR3C1, homodimerization and transcriptional activation almost abolished when missing" evidence="3">
    <location>
        <begin position="89"/>
        <end position="117"/>
    </location>
</feature>
<feature type="region of interest" description="DNA-binding" evidence="1">
    <location>
        <begin position="118"/>
        <end position="182"/>
    </location>
</feature>
<feature type="region of interest" description="Interaction with NR3C1 decreased when missing">
    <location>
        <begin position="118"/>
        <end position="182"/>
    </location>
</feature>
<feature type="coiled-coil region" evidence="2">
    <location>
        <begin position="93"/>
        <end position="153"/>
    </location>
</feature>
<protein>
    <recommendedName>
        <fullName>Homologous-pairing protein 2 homolog</fullName>
    </recommendedName>
    <alternativeName>
        <fullName>Nuclear receptor coactivator GT198</fullName>
    </alternativeName>
    <alternativeName>
        <fullName>PSMC3-interacting protein</fullName>
    </alternativeName>
    <alternativeName>
        <fullName>Proteasome 26S ATPase subunit 3-interacting protein</fullName>
    </alternativeName>
</protein>
<dbReference type="EMBL" id="AF352812">
    <property type="protein sequence ID" value="AAL23906.1"/>
    <property type="molecule type" value="mRNA"/>
</dbReference>
<dbReference type="RefSeq" id="NP_604453.2">
    <property type="nucleotide sequence ID" value="NM_134458.2"/>
</dbReference>
<dbReference type="SMR" id="Q91ZY6"/>
<dbReference type="BioGRID" id="250872">
    <property type="interactions" value="1"/>
</dbReference>
<dbReference type="CORUM" id="Q91ZY6"/>
<dbReference type="FunCoup" id="Q91ZY6">
    <property type="interactions" value="1512"/>
</dbReference>
<dbReference type="STRING" id="10116.ENSRNOP00000027159"/>
<dbReference type="iPTMnet" id="Q91ZY6"/>
<dbReference type="PhosphoSitePlus" id="Q91ZY6"/>
<dbReference type="PaxDb" id="10116-ENSRNOP00000027159"/>
<dbReference type="GeneID" id="140938"/>
<dbReference type="KEGG" id="rno:140938"/>
<dbReference type="UCSC" id="RGD:621885">
    <property type="organism name" value="rat"/>
</dbReference>
<dbReference type="AGR" id="RGD:621885"/>
<dbReference type="CTD" id="29893"/>
<dbReference type="RGD" id="621885">
    <property type="gene designation" value="Psmc3ip"/>
</dbReference>
<dbReference type="eggNOG" id="KOG4603">
    <property type="taxonomic scope" value="Eukaryota"/>
</dbReference>
<dbReference type="InParanoid" id="Q91ZY6"/>
<dbReference type="PhylomeDB" id="Q91ZY6"/>
<dbReference type="PRO" id="PR:Q91ZY6"/>
<dbReference type="Proteomes" id="UP000002494">
    <property type="component" value="Unplaced"/>
</dbReference>
<dbReference type="GO" id="GO:0000794">
    <property type="term" value="C:condensed nuclear chromosome"/>
    <property type="evidence" value="ECO:0000318"/>
    <property type="project" value="GO_Central"/>
</dbReference>
<dbReference type="GO" id="GO:0120231">
    <property type="term" value="C:DNA recombinase auxiliary factor complex"/>
    <property type="evidence" value="ECO:0000318"/>
    <property type="project" value="GO_Central"/>
</dbReference>
<dbReference type="GO" id="GO:0005634">
    <property type="term" value="C:nucleus"/>
    <property type="evidence" value="ECO:0000314"/>
    <property type="project" value="RGD"/>
</dbReference>
<dbReference type="GO" id="GO:0050692">
    <property type="term" value="F:DNA binding domain binding"/>
    <property type="evidence" value="ECO:0000314"/>
    <property type="project" value="RGD"/>
</dbReference>
<dbReference type="GO" id="GO:0003690">
    <property type="term" value="F:double-stranded DNA binding"/>
    <property type="evidence" value="ECO:0000318"/>
    <property type="project" value="GO_Central"/>
</dbReference>
<dbReference type="GO" id="GO:0042802">
    <property type="term" value="F:identical protein binding"/>
    <property type="evidence" value="ECO:0000314"/>
    <property type="project" value="RGD"/>
</dbReference>
<dbReference type="GO" id="GO:0030331">
    <property type="term" value="F:nuclear estrogen receptor binding"/>
    <property type="evidence" value="ECO:0000314"/>
    <property type="project" value="RGD"/>
</dbReference>
<dbReference type="GO" id="GO:0035259">
    <property type="term" value="F:nuclear glucocorticoid receptor binding"/>
    <property type="evidence" value="ECO:0000314"/>
    <property type="project" value="RGD"/>
</dbReference>
<dbReference type="GO" id="GO:0046965">
    <property type="term" value="F:nuclear retinoid X receptor binding"/>
    <property type="evidence" value="ECO:0000314"/>
    <property type="project" value="RGD"/>
</dbReference>
<dbReference type="GO" id="GO:0046966">
    <property type="term" value="F:nuclear thyroid hormone receptor binding"/>
    <property type="evidence" value="ECO:0000314"/>
    <property type="project" value="RGD"/>
</dbReference>
<dbReference type="GO" id="GO:0120230">
    <property type="term" value="F:recombinase activator activity"/>
    <property type="evidence" value="ECO:0000318"/>
    <property type="project" value="GO_Central"/>
</dbReference>
<dbReference type="GO" id="GO:0003713">
    <property type="term" value="F:transcription coactivator activity"/>
    <property type="evidence" value="ECO:0000266"/>
    <property type="project" value="RGD"/>
</dbReference>
<dbReference type="GO" id="GO:0030521">
    <property type="term" value="P:androgen receptor signaling pathway"/>
    <property type="evidence" value="ECO:0000314"/>
    <property type="project" value="RGD"/>
</dbReference>
<dbReference type="GO" id="GO:0030520">
    <property type="term" value="P:estrogen receptor signaling pathway"/>
    <property type="evidence" value="ECO:0000314"/>
    <property type="project" value="RGD"/>
</dbReference>
<dbReference type="GO" id="GO:0007129">
    <property type="term" value="P:homologous chromosome pairing at meiosis"/>
    <property type="evidence" value="ECO:0000266"/>
    <property type="project" value="RGD"/>
</dbReference>
<dbReference type="GO" id="GO:0000709">
    <property type="term" value="P:meiotic joint molecule formation"/>
    <property type="evidence" value="ECO:0000318"/>
    <property type="project" value="GO_Central"/>
</dbReference>
<dbReference type="GO" id="GO:0010774">
    <property type="term" value="P:meiotic strand invasion involved in reciprocal meiotic recombination"/>
    <property type="evidence" value="ECO:0000318"/>
    <property type="project" value="GO_Central"/>
</dbReference>
<dbReference type="GO" id="GO:0045893">
    <property type="term" value="P:positive regulation of DNA-templated transcription"/>
    <property type="evidence" value="ECO:0000314"/>
    <property type="project" value="RGD"/>
</dbReference>
<dbReference type="GO" id="GO:2000324">
    <property type="term" value="P:positive regulation of nuclear receptor-mediated glucocorticoid signaling pathway"/>
    <property type="evidence" value="ECO:0000314"/>
    <property type="project" value="RGD"/>
</dbReference>
<dbReference type="GO" id="GO:0050847">
    <property type="term" value="P:progesterone receptor signaling pathway"/>
    <property type="evidence" value="ECO:0000314"/>
    <property type="project" value="RGD"/>
</dbReference>
<dbReference type="GO" id="GO:0007131">
    <property type="term" value="P:reciprocal meiotic recombination"/>
    <property type="evidence" value="ECO:0000266"/>
    <property type="project" value="RGD"/>
</dbReference>
<dbReference type="GO" id="GO:0002154">
    <property type="term" value="P:thyroid hormone receptor signaling pathway"/>
    <property type="evidence" value="ECO:0000314"/>
    <property type="project" value="RGD"/>
</dbReference>
<dbReference type="FunFam" id="1.10.10.10:FF:000394">
    <property type="entry name" value="Homologous-pairing protein 2 homolog"/>
    <property type="match status" value="1"/>
</dbReference>
<dbReference type="Gene3D" id="1.10.10.10">
    <property type="entry name" value="Winged helix-like DNA-binding domain superfamily/Winged helix DNA-binding domain"/>
    <property type="match status" value="1"/>
</dbReference>
<dbReference type="InterPro" id="IPR010776">
    <property type="entry name" value="Hop2_WH_dom"/>
</dbReference>
<dbReference type="InterPro" id="IPR040661">
    <property type="entry name" value="LZ3wCH"/>
</dbReference>
<dbReference type="InterPro" id="IPR036388">
    <property type="entry name" value="WH-like_DNA-bd_sf"/>
</dbReference>
<dbReference type="InterPro" id="IPR036390">
    <property type="entry name" value="WH_DNA-bd_sf"/>
</dbReference>
<dbReference type="PANTHER" id="PTHR15938:SF0">
    <property type="entry name" value="HOMOLOGOUS-PAIRING PROTEIN 2 HOMOLOG"/>
    <property type="match status" value="1"/>
</dbReference>
<dbReference type="PANTHER" id="PTHR15938">
    <property type="entry name" value="TBP-1 INTERACTING PROTEIN"/>
    <property type="match status" value="1"/>
</dbReference>
<dbReference type="Pfam" id="PF18517">
    <property type="entry name" value="LZ3wCH"/>
    <property type="match status" value="1"/>
</dbReference>
<dbReference type="Pfam" id="PF07106">
    <property type="entry name" value="TBPIP"/>
    <property type="match status" value="1"/>
</dbReference>
<dbReference type="SUPFAM" id="SSF46785">
    <property type="entry name" value="Winged helix' DNA-binding domain"/>
    <property type="match status" value="1"/>
</dbReference>
<name>HOP2_RAT</name>
<comment type="function">
    <text evidence="1 3">Plays an important role in meiotic recombination. Stimulates DMC1-mediated strand exchange required for pairing homologous chromosomes during meiosis. The complex PSMC3IP/MND1 binds DNA, stimulates the recombinase activity of DMC1 as well as DMC1 D-loop formation from double-strand DNA. This complex stabilizes presynaptic RAD51 and DMC1 filaments formed on single strand DNA to capture double-strand DNA. This complex stimulates both synaptic and presynaptic critical steps in RAD51 and DMC1-promoted homologous pairing. May inhibit HIV-1 viral protein TAT activity and modulate the activity of proteasomes through association with PSMC3 (By similarity). Plays a role as a coactivator in nuclear receptor-mediated transcription.</text>
</comment>
<comment type="subunit">
    <text evidence="1 3">Forms a stable heterodimer with MND1. Interacts with PSMC3/TBP1 (By similarity). Interacts with the DNA-binding domain of the nuclear receptors NR3C1/GR, ESR2/ER-beta, THRB and RXRA.</text>
</comment>
<comment type="subcellular location">
    <subcellularLocation>
        <location evidence="1">Nucleus</location>
    </subcellularLocation>
</comment>
<comment type="PTM">
    <text evidence="3">Phosphorylated by PKA, PKC and MAPK.</text>
</comment>
<comment type="similarity">
    <text evidence="4">Belongs to the HOP2 family.</text>
</comment>